<organism>
    <name type="scientific">Salmonella paratyphi A (strain AKU_12601)</name>
    <dbReference type="NCBI Taxonomy" id="554290"/>
    <lineage>
        <taxon>Bacteria</taxon>
        <taxon>Pseudomonadati</taxon>
        <taxon>Pseudomonadota</taxon>
        <taxon>Gammaproteobacteria</taxon>
        <taxon>Enterobacterales</taxon>
        <taxon>Enterobacteriaceae</taxon>
        <taxon>Salmonella</taxon>
    </lineage>
</organism>
<sequence>MDNFLALTLSGTTPRVTQGKGAGFRWRWLSHGLLELTPDAPVDRALILSAGIHGNETAPVEMLDKLLSALYSGSLTLTWRVLVVLGNPQALAAGIRYCHSDMNRMFGGRWQSFAESDETRRARELELSLETFFSSGQARVRWHLDLHTAIRGSHHLRFGVLPQRDRPWETGFLAWLGAAGLEALVFHQAPGGTFTHFSSEHFGALSCTLELGKALPFGQNDLTQFSVTSQALSALLSGVETSTSSSPPLRYRVVSQITRHSDKFALYMDAQTLNFTAFAKGTLLAEEGDKRVTVTHDVEYVLFPNPSVACGLRAGLMLERLP</sequence>
<name>ASTE_SALPK</name>
<feature type="chain" id="PRO_1000133644" description="Succinylglutamate desuccinylase">
    <location>
        <begin position="1"/>
        <end position="322"/>
    </location>
</feature>
<feature type="active site" evidence="1">
    <location>
        <position position="210"/>
    </location>
</feature>
<feature type="binding site" evidence="1">
    <location>
        <position position="53"/>
    </location>
    <ligand>
        <name>Zn(2+)</name>
        <dbReference type="ChEBI" id="CHEBI:29105"/>
    </ligand>
</feature>
<feature type="binding site" evidence="1">
    <location>
        <position position="56"/>
    </location>
    <ligand>
        <name>Zn(2+)</name>
        <dbReference type="ChEBI" id="CHEBI:29105"/>
    </ligand>
</feature>
<feature type="binding site" evidence="1">
    <location>
        <position position="147"/>
    </location>
    <ligand>
        <name>Zn(2+)</name>
        <dbReference type="ChEBI" id="CHEBI:29105"/>
    </ligand>
</feature>
<proteinExistence type="inferred from homology"/>
<reference key="1">
    <citation type="journal article" date="2009" name="BMC Genomics">
        <title>Pseudogene accumulation in the evolutionary histories of Salmonella enterica serovars Paratyphi A and Typhi.</title>
        <authorList>
            <person name="Holt K.E."/>
            <person name="Thomson N.R."/>
            <person name="Wain J."/>
            <person name="Langridge G.C."/>
            <person name="Hasan R."/>
            <person name="Bhutta Z.A."/>
            <person name="Quail M.A."/>
            <person name="Norbertczak H."/>
            <person name="Walker D."/>
            <person name="Simmonds M."/>
            <person name="White B."/>
            <person name="Bason N."/>
            <person name="Mungall K."/>
            <person name="Dougan G."/>
            <person name="Parkhill J."/>
        </authorList>
    </citation>
    <scope>NUCLEOTIDE SEQUENCE [LARGE SCALE GENOMIC DNA]</scope>
    <source>
        <strain>AKU_12601</strain>
    </source>
</reference>
<gene>
    <name evidence="1" type="primary">astE</name>
    <name type="ordered locus">SSPA1428</name>
</gene>
<accession>B5BA68</accession>
<keyword id="KW-0056">Arginine metabolism</keyword>
<keyword id="KW-0378">Hydrolase</keyword>
<keyword id="KW-0479">Metal-binding</keyword>
<keyword id="KW-0862">Zinc</keyword>
<protein>
    <recommendedName>
        <fullName evidence="1">Succinylglutamate desuccinylase</fullName>
        <ecNumber evidence="1">3.5.1.96</ecNumber>
    </recommendedName>
</protein>
<dbReference type="EC" id="3.5.1.96" evidence="1"/>
<dbReference type="EMBL" id="FM200053">
    <property type="protein sequence ID" value="CAR59607.1"/>
    <property type="molecule type" value="Genomic_DNA"/>
</dbReference>
<dbReference type="RefSeq" id="WP_000368463.1">
    <property type="nucleotide sequence ID" value="NC_011147.1"/>
</dbReference>
<dbReference type="SMR" id="B5BA68"/>
<dbReference type="KEGG" id="sek:SSPA1428"/>
<dbReference type="HOGENOM" id="CLU_071608_0_0_6"/>
<dbReference type="UniPathway" id="UPA00185">
    <property type="reaction ID" value="UER00283"/>
</dbReference>
<dbReference type="Proteomes" id="UP000001869">
    <property type="component" value="Chromosome"/>
</dbReference>
<dbReference type="GO" id="GO:0016788">
    <property type="term" value="F:hydrolase activity, acting on ester bonds"/>
    <property type="evidence" value="ECO:0007669"/>
    <property type="project" value="UniProtKB-UniRule"/>
</dbReference>
<dbReference type="GO" id="GO:0009017">
    <property type="term" value="F:succinylglutamate desuccinylase activity"/>
    <property type="evidence" value="ECO:0007669"/>
    <property type="project" value="UniProtKB-EC"/>
</dbReference>
<dbReference type="GO" id="GO:0008270">
    <property type="term" value="F:zinc ion binding"/>
    <property type="evidence" value="ECO:0007669"/>
    <property type="project" value="UniProtKB-UniRule"/>
</dbReference>
<dbReference type="GO" id="GO:0019544">
    <property type="term" value="P:arginine catabolic process to glutamate"/>
    <property type="evidence" value="ECO:0007669"/>
    <property type="project" value="UniProtKB-UniRule"/>
</dbReference>
<dbReference type="GO" id="GO:0019545">
    <property type="term" value="P:arginine catabolic process to succinate"/>
    <property type="evidence" value="ECO:0007669"/>
    <property type="project" value="UniProtKB-UniRule"/>
</dbReference>
<dbReference type="CDD" id="cd03855">
    <property type="entry name" value="M14_ASTE"/>
    <property type="match status" value="1"/>
</dbReference>
<dbReference type="FunFam" id="3.40.630.10:FF:000017">
    <property type="entry name" value="Succinylglutamate desuccinylase"/>
    <property type="match status" value="1"/>
</dbReference>
<dbReference type="Gene3D" id="3.40.630.10">
    <property type="entry name" value="Zn peptidases"/>
    <property type="match status" value="1"/>
</dbReference>
<dbReference type="HAMAP" id="MF_00767">
    <property type="entry name" value="Arg_catab_AstE"/>
    <property type="match status" value="1"/>
</dbReference>
<dbReference type="InterPro" id="IPR050178">
    <property type="entry name" value="AspA/AstE_fam"/>
</dbReference>
<dbReference type="InterPro" id="IPR055438">
    <property type="entry name" value="AstE_AspA_cat"/>
</dbReference>
<dbReference type="InterPro" id="IPR007036">
    <property type="entry name" value="Aste_AspA_hybrid_dom"/>
</dbReference>
<dbReference type="InterPro" id="IPR016681">
    <property type="entry name" value="SuccinylGlu_desuccinylase"/>
</dbReference>
<dbReference type="NCBIfam" id="TIGR03242">
    <property type="entry name" value="arg_catab_astE"/>
    <property type="match status" value="1"/>
</dbReference>
<dbReference type="NCBIfam" id="NF003706">
    <property type="entry name" value="PRK05324.1"/>
    <property type="match status" value="1"/>
</dbReference>
<dbReference type="PANTHER" id="PTHR15162">
    <property type="entry name" value="ASPARTOACYLASE"/>
    <property type="match status" value="1"/>
</dbReference>
<dbReference type="PANTHER" id="PTHR15162:SF7">
    <property type="entry name" value="SUCCINYLGLUTAMATE DESUCCINYLASE"/>
    <property type="match status" value="1"/>
</dbReference>
<dbReference type="Pfam" id="PF24827">
    <property type="entry name" value="AstE_AspA_cat"/>
    <property type="match status" value="1"/>
</dbReference>
<dbReference type="Pfam" id="PF04952">
    <property type="entry name" value="AstE_AspA_hybrid"/>
    <property type="match status" value="1"/>
</dbReference>
<dbReference type="PIRSF" id="PIRSF017020">
    <property type="entry name" value="AstE"/>
    <property type="match status" value="1"/>
</dbReference>
<dbReference type="SUPFAM" id="SSF53187">
    <property type="entry name" value="Zn-dependent exopeptidases"/>
    <property type="match status" value="1"/>
</dbReference>
<comment type="function">
    <text evidence="1">Transforms N(2)-succinylglutamate into succinate and glutamate.</text>
</comment>
<comment type="catalytic activity">
    <reaction evidence="1">
        <text>N-succinyl-L-glutamate + H2O = L-glutamate + succinate</text>
        <dbReference type="Rhea" id="RHEA:15169"/>
        <dbReference type="ChEBI" id="CHEBI:15377"/>
        <dbReference type="ChEBI" id="CHEBI:29985"/>
        <dbReference type="ChEBI" id="CHEBI:30031"/>
        <dbReference type="ChEBI" id="CHEBI:58763"/>
        <dbReference type="EC" id="3.5.1.96"/>
    </reaction>
</comment>
<comment type="cofactor">
    <cofactor evidence="1">
        <name>Zn(2+)</name>
        <dbReference type="ChEBI" id="CHEBI:29105"/>
    </cofactor>
    <text evidence="1">Binds 1 zinc ion per subunit.</text>
</comment>
<comment type="pathway">
    <text evidence="1">Amino-acid degradation; L-arginine degradation via AST pathway; L-glutamate and succinate from L-arginine: step 5/5.</text>
</comment>
<comment type="similarity">
    <text evidence="1">Belongs to the AspA/AstE family. Succinylglutamate desuccinylase subfamily.</text>
</comment>
<evidence type="ECO:0000255" key="1">
    <source>
        <dbReference type="HAMAP-Rule" id="MF_00767"/>
    </source>
</evidence>